<evidence type="ECO:0000255" key="1">
    <source>
        <dbReference type="HAMAP-Rule" id="MF_00090"/>
    </source>
</evidence>
<protein>
    <recommendedName>
        <fullName evidence="1">Protein-L-isoaspartate O-methyltransferase</fullName>
        <ecNumber evidence="1">2.1.1.77</ecNumber>
    </recommendedName>
    <alternativeName>
        <fullName evidence="1">L-isoaspartyl protein carboxyl methyltransferase</fullName>
    </alternativeName>
    <alternativeName>
        <fullName evidence="1">Protein L-isoaspartyl methyltransferase</fullName>
    </alternativeName>
    <alternativeName>
        <fullName evidence="1">Protein-beta-aspartate methyltransferase</fullName>
        <shortName evidence="1">PIMT</shortName>
    </alternativeName>
</protein>
<sequence length="215" mass="23939">MPPTAPPEKMMFQLTLRRRGISDQAVLRTMEEVPREEFVLPADRAEAYRDSAMAIACGQTISQPFVVAYMTEQLKLQKNHRVLEIGTGSGYQAAILSRLCANVLTVERFRTLADKARERLEKLNCFNVEVMLGDGYALPPGAGQFDRIIVTAAMDQIPQSLLDRLEPDGILIAPVGPQHGVQTLVRVTRTGDHFDRKELVDVRFVPAIPGIAREL</sequence>
<accession>A5EJV5</accession>
<proteinExistence type="inferred from homology"/>
<reference key="1">
    <citation type="journal article" date="2007" name="Science">
        <title>Legumes symbioses: absence of nod genes in photosynthetic bradyrhizobia.</title>
        <authorList>
            <person name="Giraud E."/>
            <person name="Moulin L."/>
            <person name="Vallenet D."/>
            <person name="Barbe V."/>
            <person name="Cytryn E."/>
            <person name="Avarre J.-C."/>
            <person name="Jaubert M."/>
            <person name="Simon D."/>
            <person name="Cartieaux F."/>
            <person name="Prin Y."/>
            <person name="Bena G."/>
            <person name="Hannibal L."/>
            <person name="Fardoux J."/>
            <person name="Kojadinovic M."/>
            <person name="Vuillet L."/>
            <person name="Lajus A."/>
            <person name="Cruveiller S."/>
            <person name="Rouy Z."/>
            <person name="Mangenot S."/>
            <person name="Segurens B."/>
            <person name="Dossat C."/>
            <person name="Franck W.L."/>
            <person name="Chang W.-S."/>
            <person name="Saunders E."/>
            <person name="Bruce D."/>
            <person name="Richardson P."/>
            <person name="Normand P."/>
            <person name="Dreyfus B."/>
            <person name="Pignol D."/>
            <person name="Stacey G."/>
            <person name="Emerich D."/>
            <person name="Vermeglio A."/>
            <person name="Medigue C."/>
            <person name="Sadowsky M."/>
        </authorList>
    </citation>
    <scope>NUCLEOTIDE SEQUENCE [LARGE SCALE GENOMIC DNA]</scope>
    <source>
        <strain>BTAi1 / ATCC BAA-1182</strain>
    </source>
</reference>
<gene>
    <name evidence="1" type="primary">pcm</name>
    <name type="ordered locus">BBta_4410</name>
</gene>
<name>PIMT_BRASB</name>
<feature type="chain" id="PRO_0000351822" description="Protein-L-isoaspartate O-methyltransferase">
    <location>
        <begin position="1"/>
        <end position="215"/>
    </location>
</feature>
<feature type="active site" evidence="1">
    <location>
        <position position="62"/>
    </location>
</feature>
<keyword id="KW-0963">Cytoplasm</keyword>
<keyword id="KW-0489">Methyltransferase</keyword>
<keyword id="KW-1185">Reference proteome</keyword>
<keyword id="KW-0949">S-adenosyl-L-methionine</keyword>
<keyword id="KW-0808">Transferase</keyword>
<dbReference type="EC" id="2.1.1.77" evidence="1"/>
<dbReference type="EMBL" id="CP000494">
    <property type="protein sequence ID" value="ABQ36449.1"/>
    <property type="molecule type" value="Genomic_DNA"/>
</dbReference>
<dbReference type="RefSeq" id="WP_012044446.1">
    <property type="nucleotide sequence ID" value="NC_009485.1"/>
</dbReference>
<dbReference type="SMR" id="A5EJV5"/>
<dbReference type="STRING" id="288000.BBta_4410"/>
<dbReference type="KEGG" id="bbt:BBta_4410"/>
<dbReference type="eggNOG" id="COG2518">
    <property type="taxonomic scope" value="Bacteria"/>
</dbReference>
<dbReference type="HOGENOM" id="CLU_055432_2_0_5"/>
<dbReference type="Proteomes" id="UP000000246">
    <property type="component" value="Chromosome"/>
</dbReference>
<dbReference type="GO" id="GO:0005737">
    <property type="term" value="C:cytoplasm"/>
    <property type="evidence" value="ECO:0007669"/>
    <property type="project" value="UniProtKB-SubCell"/>
</dbReference>
<dbReference type="GO" id="GO:0004719">
    <property type="term" value="F:protein-L-isoaspartate (D-aspartate) O-methyltransferase activity"/>
    <property type="evidence" value="ECO:0007669"/>
    <property type="project" value="UniProtKB-UniRule"/>
</dbReference>
<dbReference type="GO" id="GO:0032259">
    <property type="term" value="P:methylation"/>
    <property type="evidence" value="ECO:0007669"/>
    <property type="project" value="UniProtKB-KW"/>
</dbReference>
<dbReference type="GO" id="GO:0036211">
    <property type="term" value="P:protein modification process"/>
    <property type="evidence" value="ECO:0007669"/>
    <property type="project" value="UniProtKB-UniRule"/>
</dbReference>
<dbReference type="GO" id="GO:0030091">
    <property type="term" value="P:protein repair"/>
    <property type="evidence" value="ECO:0007669"/>
    <property type="project" value="UniProtKB-UniRule"/>
</dbReference>
<dbReference type="CDD" id="cd02440">
    <property type="entry name" value="AdoMet_MTases"/>
    <property type="match status" value="1"/>
</dbReference>
<dbReference type="FunFam" id="3.40.50.150:FF:000010">
    <property type="entry name" value="Protein-L-isoaspartate O-methyltransferase"/>
    <property type="match status" value="1"/>
</dbReference>
<dbReference type="Gene3D" id="3.40.50.150">
    <property type="entry name" value="Vaccinia Virus protein VP39"/>
    <property type="match status" value="1"/>
</dbReference>
<dbReference type="HAMAP" id="MF_00090">
    <property type="entry name" value="PIMT"/>
    <property type="match status" value="1"/>
</dbReference>
<dbReference type="InterPro" id="IPR000682">
    <property type="entry name" value="PCMT"/>
</dbReference>
<dbReference type="InterPro" id="IPR029063">
    <property type="entry name" value="SAM-dependent_MTases_sf"/>
</dbReference>
<dbReference type="NCBIfam" id="TIGR00080">
    <property type="entry name" value="pimt"/>
    <property type="match status" value="1"/>
</dbReference>
<dbReference type="NCBIfam" id="NF001453">
    <property type="entry name" value="PRK00312.1"/>
    <property type="match status" value="1"/>
</dbReference>
<dbReference type="PANTHER" id="PTHR11579">
    <property type="entry name" value="PROTEIN-L-ISOASPARTATE O-METHYLTRANSFERASE"/>
    <property type="match status" value="1"/>
</dbReference>
<dbReference type="PANTHER" id="PTHR11579:SF0">
    <property type="entry name" value="PROTEIN-L-ISOASPARTATE(D-ASPARTATE) O-METHYLTRANSFERASE"/>
    <property type="match status" value="1"/>
</dbReference>
<dbReference type="Pfam" id="PF01135">
    <property type="entry name" value="PCMT"/>
    <property type="match status" value="1"/>
</dbReference>
<dbReference type="SUPFAM" id="SSF53335">
    <property type="entry name" value="S-adenosyl-L-methionine-dependent methyltransferases"/>
    <property type="match status" value="1"/>
</dbReference>
<comment type="function">
    <text evidence="1">Catalyzes the methyl esterification of L-isoaspartyl residues in peptides and proteins that result from spontaneous decomposition of normal L-aspartyl and L-asparaginyl residues. It plays a role in the repair and/or degradation of damaged proteins.</text>
</comment>
<comment type="catalytic activity">
    <reaction evidence="1">
        <text>[protein]-L-isoaspartate + S-adenosyl-L-methionine = [protein]-L-isoaspartate alpha-methyl ester + S-adenosyl-L-homocysteine</text>
        <dbReference type="Rhea" id="RHEA:12705"/>
        <dbReference type="Rhea" id="RHEA-COMP:12143"/>
        <dbReference type="Rhea" id="RHEA-COMP:12144"/>
        <dbReference type="ChEBI" id="CHEBI:57856"/>
        <dbReference type="ChEBI" id="CHEBI:59789"/>
        <dbReference type="ChEBI" id="CHEBI:90596"/>
        <dbReference type="ChEBI" id="CHEBI:90598"/>
        <dbReference type="EC" id="2.1.1.77"/>
    </reaction>
</comment>
<comment type="subcellular location">
    <subcellularLocation>
        <location evidence="1">Cytoplasm</location>
    </subcellularLocation>
</comment>
<comment type="similarity">
    <text evidence="1">Belongs to the methyltransferase superfamily. L-isoaspartyl/D-aspartyl protein methyltransferase family.</text>
</comment>
<organism>
    <name type="scientific">Bradyrhizobium sp. (strain BTAi1 / ATCC BAA-1182)</name>
    <dbReference type="NCBI Taxonomy" id="288000"/>
    <lineage>
        <taxon>Bacteria</taxon>
        <taxon>Pseudomonadati</taxon>
        <taxon>Pseudomonadota</taxon>
        <taxon>Alphaproteobacteria</taxon>
        <taxon>Hyphomicrobiales</taxon>
        <taxon>Nitrobacteraceae</taxon>
        <taxon>Bradyrhizobium</taxon>
    </lineage>
</organism>